<sequence length="122" mass="13093">MNAVTESAATTEMPAPFVFTDAAADKVKQLIDEEGNPDLKLRVFVQGGGCSGFQYGFTFDEEVNEDDTVLNKNGVVLLVDAMSYQYLVGAEIDYKDDLNGAQFVIKNPNATTTCGCGSSFSV</sequence>
<accession>A3MP61</accession>
<evidence type="ECO:0000255" key="1">
    <source>
        <dbReference type="HAMAP-Rule" id="MF_01380"/>
    </source>
</evidence>
<gene>
    <name evidence="1" type="primary">erpA</name>
    <name type="ordered locus">BMA10247_2521</name>
</gene>
<proteinExistence type="inferred from homology"/>
<reference key="1">
    <citation type="journal article" date="2010" name="Genome Biol. Evol.">
        <title>Continuing evolution of Burkholderia mallei through genome reduction and large-scale rearrangements.</title>
        <authorList>
            <person name="Losada L."/>
            <person name="Ronning C.M."/>
            <person name="DeShazer D."/>
            <person name="Woods D."/>
            <person name="Fedorova N."/>
            <person name="Kim H.S."/>
            <person name="Shabalina S.A."/>
            <person name="Pearson T.R."/>
            <person name="Brinkac L."/>
            <person name="Tan P."/>
            <person name="Nandi T."/>
            <person name="Crabtree J."/>
            <person name="Badger J."/>
            <person name="Beckstrom-Sternberg S."/>
            <person name="Saqib M."/>
            <person name="Schutzer S.E."/>
            <person name="Keim P."/>
            <person name="Nierman W.C."/>
        </authorList>
    </citation>
    <scope>NUCLEOTIDE SEQUENCE [LARGE SCALE GENOMIC DNA]</scope>
    <source>
        <strain>NCTC 10247</strain>
    </source>
</reference>
<comment type="function">
    <text evidence="1">Required for insertion of 4Fe-4S clusters.</text>
</comment>
<comment type="cofactor">
    <cofactor evidence="1">
        <name>iron-sulfur cluster</name>
        <dbReference type="ChEBI" id="CHEBI:30408"/>
    </cofactor>
    <text evidence="1">Binds 1 iron-sulfur cluster per subunit.</text>
</comment>
<comment type="subunit">
    <text evidence="1">Homodimer.</text>
</comment>
<comment type="similarity">
    <text evidence="1">Belongs to the HesB/IscA family.</text>
</comment>
<dbReference type="EMBL" id="CP000548">
    <property type="protein sequence ID" value="ABO07385.1"/>
    <property type="molecule type" value="Genomic_DNA"/>
</dbReference>
<dbReference type="RefSeq" id="WP_004194247.1">
    <property type="nucleotide sequence ID" value="NZ_CP007802.1"/>
</dbReference>
<dbReference type="SMR" id="A3MP61"/>
<dbReference type="GeneID" id="93061505"/>
<dbReference type="KEGG" id="bmaz:BM44_782"/>
<dbReference type="KEGG" id="bmn:BMA10247_2521"/>
<dbReference type="PATRIC" id="fig|320389.8.peg.869"/>
<dbReference type="GO" id="GO:0051537">
    <property type="term" value="F:2 iron, 2 sulfur cluster binding"/>
    <property type="evidence" value="ECO:0007669"/>
    <property type="project" value="TreeGrafter"/>
</dbReference>
<dbReference type="GO" id="GO:0051539">
    <property type="term" value="F:4 iron, 4 sulfur cluster binding"/>
    <property type="evidence" value="ECO:0007669"/>
    <property type="project" value="TreeGrafter"/>
</dbReference>
<dbReference type="GO" id="GO:0005506">
    <property type="term" value="F:iron ion binding"/>
    <property type="evidence" value="ECO:0007669"/>
    <property type="project" value="UniProtKB-UniRule"/>
</dbReference>
<dbReference type="GO" id="GO:0016226">
    <property type="term" value="P:iron-sulfur cluster assembly"/>
    <property type="evidence" value="ECO:0007669"/>
    <property type="project" value="UniProtKB-UniRule"/>
</dbReference>
<dbReference type="FunFam" id="2.60.300.12:FF:000002">
    <property type="entry name" value="Iron-sulfur cluster insertion protein ErpA"/>
    <property type="match status" value="1"/>
</dbReference>
<dbReference type="Gene3D" id="2.60.300.12">
    <property type="entry name" value="HesB-like domain"/>
    <property type="match status" value="1"/>
</dbReference>
<dbReference type="HAMAP" id="MF_01380">
    <property type="entry name" value="Fe_S_insert_ErpA"/>
    <property type="match status" value="1"/>
</dbReference>
<dbReference type="InterPro" id="IPR000361">
    <property type="entry name" value="FeS_biogenesis"/>
</dbReference>
<dbReference type="InterPro" id="IPR016092">
    <property type="entry name" value="FeS_cluster_insertion"/>
</dbReference>
<dbReference type="InterPro" id="IPR017870">
    <property type="entry name" value="FeS_cluster_insertion_CS"/>
</dbReference>
<dbReference type="InterPro" id="IPR023063">
    <property type="entry name" value="FeS_cluster_insertion_RrpA"/>
</dbReference>
<dbReference type="InterPro" id="IPR035903">
    <property type="entry name" value="HesB-like_dom_sf"/>
</dbReference>
<dbReference type="NCBIfam" id="TIGR00049">
    <property type="entry name" value="iron-sulfur cluster assembly accessory protein"/>
    <property type="match status" value="1"/>
</dbReference>
<dbReference type="NCBIfam" id="NF010147">
    <property type="entry name" value="PRK13623.1"/>
    <property type="match status" value="1"/>
</dbReference>
<dbReference type="PANTHER" id="PTHR43011">
    <property type="entry name" value="IRON-SULFUR CLUSTER ASSEMBLY 2 HOMOLOG, MITOCHONDRIAL"/>
    <property type="match status" value="1"/>
</dbReference>
<dbReference type="PANTHER" id="PTHR43011:SF1">
    <property type="entry name" value="IRON-SULFUR CLUSTER ASSEMBLY 2 HOMOLOG, MITOCHONDRIAL"/>
    <property type="match status" value="1"/>
</dbReference>
<dbReference type="Pfam" id="PF01521">
    <property type="entry name" value="Fe-S_biosyn"/>
    <property type="match status" value="1"/>
</dbReference>
<dbReference type="SUPFAM" id="SSF89360">
    <property type="entry name" value="HesB-like domain"/>
    <property type="match status" value="1"/>
</dbReference>
<dbReference type="PROSITE" id="PS01152">
    <property type="entry name" value="HESB"/>
    <property type="match status" value="1"/>
</dbReference>
<protein>
    <recommendedName>
        <fullName evidence="1">Putative iron-sulfur cluster insertion protein ErpA</fullName>
    </recommendedName>
</protein>
<keyword id="KW-0408">Iron</keyword>
<keyword id="KW-0411">Iron-sulfur</keyword>
<keyword id="KW-0479">Metal-binding</keyword>
<name>ERPA_BURM7</name>
<feature type="chain" id="PRO_0000311459" description="Putative iron-sulfur cluster insertion protein ErpA">
    <location>
        <begin position="1"/>
        <end position="122"/>
    </location>
</feature>
<feature type="binding site" evidence="1">
    <location>
        <position position="50"/>
    </location>
    <ligand>
        <name>iron-sulfur cluster</name>
        <dbReference type="ChEBI" id="CHEBI:30408"/>
    </ligand>
</feature>
<feature type="binding site" evidence="1">
    <location>
        <position position="114"/>
    </location>
    <ligand>
        <name>iron-sulfur cluster</name>
        <dbReference type="ChEBI" id="CHEBI:30408"/>
    </ligand>
</feature>
<feature type="binding site" evidence="1">
    <location>
        <position position="116"/>
    </location>
    <ligand>
        <name>iron-sulfur cluster</name>
        <dbReference type="ChEBI" id="CHEBI:30408"/>
    </ligand>
</feature>
<organism>
    <name type="scientific">Burkholderia mallei (strain NCTC 10247)</name>
    <dbReference type="NCBI Taxonomy" id="320389"/>
    <lineage>
        <taxon>Bacteria</taxon>
        <taxon>Pseudomonadati</taxon>
        <taxon>Pseudomonadota</taxon>
        <taxon>Betaproteobacteria</taxon>
        <taxon>Burkholderiales</taxon>
        <taxon>Burkholderiaceae</taxon>
        <taxon>Burkholderia</taxon>
        <taxon>pseudomallei group</taxon>
    </lineage>
</organism>